<name>RLMN_RALPJ</name>
<keyword id="KW-0004">4Fe-4S</keyword>
<keyword id="KW-0963">Cytoplasm</keyword>
<keyword id="KW-1015">Disulfide bond</keyword>
<keyword id="KW-0408">Iron</keyword>
<keyword id="KW-0411">Iron-sulfur</keyword>
<keyword id="KW-0479">Metal-binding</keyword>
<keyword id="KW-0489">Methyltransferase</keyword>
<keyword id="KW-0698">rRNA processing</keyword>
<keyword id="KW-0949">S-adenosyl-L-methionine</keyword>
<keyword id="KW-0808">Transferase</keyword>
<keyword id="KW-0819">tRNA processing</keyword>
<sequence length="383" mass="42147">MSDVVNLLDFDAQGLLAYCESLGEKSFRAKQLQRWIHQSGASEFGEMTDLAKSLREKLATRANIQAPAVISDHLSSDGTRKWLVDVGQGNAVETVYIPEETRGTLCVSSQAGCAVNCRFCSTGKQGFSRNLSTGEIIGQLWMAEFAMRKQLGRGPKDDRVITNVVMMGMGEPLLNYDAVVPALALMLDDNAYGLSRRRVTVSTSGVVPMMDRLARDVPVALAVSLHASNDALRDVLVPLNKKYPLAELMAACRRYLEFAPRDFITFEYCMLDGVNDTVEHARELLRVVADVPCKFNLIPFNPFPESGLKRSNNEQIRRFSQVLLDAGIVTTIRKTRGDDIDAACGQLAGEVKDRTRLAERGKFGKIVEIPVVGADSTHRMGTA</sequence>
<evidence type="ECO:0000255" key="1">
    <source>
        <dbReference type="HAMAP-Rule" id="MF_01849"/>
    </source>
</evidence>
<evidence type="ECO:0000255" key="2">
    <source>
        <dbReference type="PROSITE-ProRule" id="PRU01266"/>
    </source>
</evidence>
<proteinExistence type="inferred from homology"/>
<reference key="1">
    <citation type="submission" date="2008-05" db="EMBL/GenBank/DDBJ databases">
        <title>Complete sequence of chromosome 1 of Ralstonia pickettii 12J.</title>
        <authorList>
            <person name="Lucas S."/>
            <person name="Copeland A."/>
            <person name="Lapidus A."/>
            <person name="Glavina del Rio T."/>
            <person name="Dalin E."/>
            <person name="Tice H."/>
            <person name="Bruce D."/>
            <person name="Goodwin L."/>
            <person name="Pitluck S."/>
            <person name="Meincke L."/>
            <person name="Brettin T."/>
            <person name="Detter J.C."/>
            <person name="Han C."/>
            <person name="Kuske C.R."/>
            <person name="Schmutz J."/>
            <person name="Larimer F."/>
            <person name="Land M."/>
            <person name="Hauser L."/>
            <person name="Kyrpides N."/>
            <person name="Mikhailova N."/>
            <person name="Marsh T."/>
            <person name="Richardson P."/>
        </authorList>
    </citation>
    <scope>NUCLEOTIDE SEQUENCE [LARGE SCALE GENOMIC DNA]</scope>
    <source>
        <strain>12J</strain>
    </source>
</reference>
<accession>B2U9U6</accession>
<gene>
    <name evidence="1" type="primary">rlmN</name>
    <name type="ordered locus">Rpic_1056</name>
</gene>
<feature type="chain" id="PRO_1000188591" description="Dual-specificity RNA methyltransferase RlmN">
    <location>
        <begin position="1"/>
        <end position="383"/>
    </location>
</feature>
<feature type="domain" description="Radical SAM core" evidence="2">
    <location>
        <begin position="99"/>
        <end position="339"/>
    </location>
</feature>
<feature type="active site" description="Proton acceptor" evidence="1">
    <location>
        <position position="93"/>
    </location>
</feature>
<feature type="active site" description="S-methylcysteine intermediate" evidence="1">
    <location>
        <position position="344"/>
    </location>
</feature>
<feature type="binding site" evidence="1">
    <location>
        <position position="113"/>
    </location>
    <ligand>
        <name>[4Fe-4S] cluster</name>
        <dbReference type="ChEBI" id="CHEBI:49883"/>
        <note>4Fe-4S-S-AdoMet</note>
    </ligand>
</feature>
<feature type="binding site" evidence="1">
    <location>
        <position position="117"/>
    </location>
    <ligand>
        <name>[4Fe-4S] cluster</name>
        <dbReference type="ChEBI" id="CHEBI:49883"/>
        <note>4Fe-4S-S-AdoMet</note>
    </ligand>
</feature>
<feature type="binding site" evidence="1">
    <location>
        <position position="120"/>
    </location>
    <ligand>
        <name>[4Fe-4S] cluster</name>
        <dbReference type="ChEBI" id="CHEBI:49883"/>
        <note>4Fe-4S-S-AdoMet</note>
    </ligand>
</feature>
<feature type="binding site" evidence="1">
    <location>
        <begin position="170"/>
        <end position="171"/>
    </location>
    <ligand>
        <name>S-adenosyl-L-methionine</name>
        <dbReference type="ChEBI" id="CHEBI:59789"/>
    </ligand>
</feature>
<feature type="binding site" evidence="1">
    <location>
        <position position="202"/>
    </location>
    <ligand>
        <name>S-adenosyl-L-methionine</name>
        <dbReference type="ChEBI" id="CHEBI:59789"/>
    </ligand>
</feature>
<feature type="binding site" evidence="1">
    <location>
        <begin position="224"/>
        <end position="226"/>
    </location>
    <ligand>
        <name>S-adenosyl-L-methionine</name>
        <dbReference type="ChEBI" id="CHEBI:59789"/>
    </ligand>
</feature>
<feature type="binding site" evidence="1">
    <location>
        <position position="301"/>
    </location>
    <ligand>
        <name>S-adenosyl-L-methionine</name>
        <dbReference type="ChEBI" id="CHEBI:59789"/>
    </ligand>
</feature>
<feature type="disulfide bond" description="(transient)" evidence="1">
    <location>
        <begin position="106"/>
        <end position="344"/>
    </location>
</feature>
<organism>
    <name type="scientific">Ralstonia pickettii (strain 12J)</name>
    <dbReference type="NCBI Taxonomy" id="402626"/>
    <lineage>
        <taxon>Bacteria</taxon>
        <taxon>Pseudomonadati</taxon>
        <taxon>Pseudomonadota</taxon>
        <taxon>Betaproteobacteria</taxon>
        <taxon>Burkholderiales</taxon>
        <taxon>Burkholderiaceae</taxon>
        <taxon>Ralstonia</taxon>
    </lineage>
</organism>
<dbReference type="EC" id="2.1.1.192" evidence="1"/>
<dbReference type="EMBL" id="CP001068">
    <property type="protein sequence ID" value="ACD26204.1"/>
    <property type="molecule type" value="Genomic_DNA"/>
</dbReference>
<dbReference type="SMR" id="B2U9U6"/>
<dbReference type="STRING" id="402626.Rpic_1056"/>
<dbReference type="KEGG" id="rpi:Rpic_1056"/>
<dbReference type="PATRIC" id="fig|402626.5.peg.2260"/>
<dbReference type="eggNOG" id="COG0820">
    <property type="taxonomic scope" value="Bacteria"/>
</dbReference>
<dbReference type="HOGENOM" id="CLU_029101_0_0_4"/>
<dbReference type="GO" id="GO:0005737">
    <property type="term" value="C:cytoplasm"/>
    <property type="evidence" value="ECO:0007669"/>
    <property type="project" value="UniProtKB-SubCell"/>
</dbReference>
<dbReference type="GO" id="GO:0051539">
    <property type="term" value="F:4 iron, 4 sulfur cluster binding"/>
    <property type="evidence" value="ECO:0007669"/>
    <property type="project" value="UniProtKB-UniRule"/>
</dbReference>
<dbReference type="GO" id="GO:0046872">
    <property type="term" value="F:metal ion binding"/>
    <property type="evidence" value="ECO:0007669"/>
    <property type="project" value="UniProtKB-KW"/>
</dbReference>
<dbReference type="GO" id="GO:0070040">
    <property type="term" value="F:rRNA (adenine(2503)-C2-)-methyltransferase activity"/>
    <property type="evidence" value="ECO:0007669"/>
    <property type="project" value="UniProtKB-UniRule"/>
</dbReference>
<dbReference type="GO" id="GO:0019843">
    <property type="term" value="F:rRNA binding"/>
    <property type="evidence" value="ECO:0007669"/>
    <property type="project" value="UniProtKB-UniRule"/>
</dbReference>
<dbReference type="GO" id="GO:0002935">
    <property type="term" value="F:tRNA (adenine(37)-C2)-methyltransferase activity"/>
    <property type="evidence" value="ECO:0007669"/>
    <property type="project" value="UniProtKB-UniRule"/>
</dbReference>
<dbReference type="GO" id="GO:0000049">
    <property type="term" value="F:tRNA binding"/>
    <property type="evidence" value="ECO:0007669"/>
    <property type="project" value="UniProtKB-UniRule"/>
</dbReference>
<dbReference type="GO" id="GO:0070475">
    <property type="term" value="P:rRNA base methylation"/>
    <property type="evidence" value="ECO:0007669"/>
    <property type="project" value="UniProtKB-UniRule"/>
</dbReference>
<dbReference type="GO" id="GO:0030488">
    <property type="term" value="P:tRNA methylation"/>
    <property type="evidence" value="ECO:0007669"/>
    <property type="project" value="UniProtKB-UniRule"/>
</dbReference>
<dbReference type="CDD" id="cd01335">
    <property type="entry name" value="Radical_SAM"/>
    <property type="match status" value="1"/>
</dbReference>
<dbReference type="FunFam" id="1.10.150.530:FF:000003">
    <property type="entry name" value="Dual-specificity RNA methyltransferase RlmN"/>
    <property type="match status" value="1"/>
</dbReference>
<dbReference type="FunFam" id="3.20.20.70:FF:000008">
    <property type="entry name" value="Dual-specificity RNA methyltransferase RlmN"/>
    <property type="match status" value="1"/>
</dbReference>
<dbReference type="Gene3D" id="1.10.150.530">
    <property type="match status" value="1"/>
</dbReference>
<dbReference type="Gene3D" id="3.20.20.70">
    <property type="entry name" value="Aldolase class I"/>
    <property type="match status" value="1"/>
</dbReference>
<dbReference type="HAMAP" id="MF_01849">
    <property type="entry name" value="RNA_methyltr_RlmN"/>
    <property type="match status" value="1"/>
</dbReference>
<dbReference type="InterPro" id="IPR013785">
    <property type="entry name" value="Aldolase_TIM"/>
</dbReference>
<dbReference type="InterPro" id="IPR040072">
    <property type="entry name" value="Methyltransferase_A"/>
</dbReference>
<dbReference type="InterPro" id="IPR048641">
    <property type="entry name" value="RlmN_N"/>
</dbReference>
<dbReference type="InterPro" id="IPR027492">
    <property type="entry name" value="RNA_MTrfase_RlmN"/>
</dbReference>
<dbReference type="InterPro" id="IPR004383">
    <property type="entry name" value="rRNA_lsu_MTrfase_RlmN/Cfr"/>
</dbReference>
<dbReference type="InterPro" id="IPR007197">
    <property type="entry name" value="rSAM"/>
</dbReference>
<dbReference type="NCBIfam" id="TIGR00048">
    <property type="entry name" value="rRNA_mod_RlmN"/>
    <property type="match status" value="1"/>
</dbReference>
<dbReference type="PANTHER" id="PTHR30544">
    <property type="entry name" value="23S RRNA METHYLTRANSFERASE"/>
    <property type="match status" value="1"/>
</dbReference>
<dbReference type="PANTHER" id="PTHR30544:SF5">
    <property type="entry name" value="RADICAL SAM CORE DOMAIN-CONTAINING PROTEIN"/>
    <property type="match status" value="1"/>
</dbReference>
<dbReference type="Pfam" id="PF04055">
    <property type="entry name" value="Radical_SAM"/>
    <property type="match status" value="1"/>
</dbReference>
<dbReference type="Pfam" id="PF21016">
    <property type="entry name" value="RlmN_N"/>
    <property type="match status" value="1"/>
</dbReference>
<dbReference type="PIRSF" id="PIRSF006004">
    <property type="entry name" value="CHP00048"/>
    <property type="match status" value="1"/>
</dbReference>
<dbReference type="SFLD" id="SFLDF00275">
    <property type="entry name" value="adenosine_C2_methyltransferase"/>
    <property type="match status" value="1"/>
</dbReference>
<dbReference type="SFLD" id="SFLDS00029">
    <property type="entry name" value="Radical_SAM"/>
    <property type="match status" value="1"/>
</dbReference>
<dbReference type="SUPFAM" id="SSF102114">
    <property type="entry name" value="Radical SAM enzymes"/>
    <property type="match status" value="1"/>
</dbReference>
<dbReference type="PROSITE" id="PS51918">
    <property type="entry name" value="RADICAL_SAM"/>
    <property type="match status" value="1"/>
</dbReference>
<comment type="function">
    <text evidence="1">Specifically methylates position 2 of adenine 2503 in 23S rRNA and position 2 of adenine 37 in tRNAs. m2A2503 modification seems to play a crucial role in the proofreading step occurring at the peptidyl transferase center and thus would serve to optimize ribosomal fidelity.</text>
</comment>
<comment type="catalytic activity">
    <reaction evidence="1">
        <text>adenosine(2503) in 23S rRNA + 2 reduced [2Fe-2S]-[ferredoxin] + 2 S-adenosyl-L-methionine = 2-methyladenosine(2503) in 23S rRNA + 5'-deoxyadenosine + L-methionine + 2 oxidized [2Fe-2S]-[ferredoxin] + S-adenosyl-L-homocysteine</text>
        <dbReference type="Rhea" id="RHEA:42916"/>
        <dbReference type="Rhea" id="RHEA-COMP:10000"/>
        <dbReference type="Rhea" id="RHEA-COMP:10001"/>
        <dbReference type="Rhea" id="RHEA-COMP:10152"/>
        <dbReference type="Rhea" id="RHEA-COMP:10282"/>
        <dbReference type="ChEBI" id="CHEBI:17319"/>
        <dbReference type="ChEBI" id="CHEBI:33737"/>
        <dbReference type="ChEBI" id="CHEBI:33738"/>
        <dbReference type="ChEBI" id="CHEBI:57844"/>
        <dbReference type="ChEBI" id="CHEBI:57856"/>
        <dbReference type="ChEBI" id="CHEBI:59789"/>
        <dbReference type="ChEBI" id="CHEBI:74411"/>
        <dbReference type="ChEBI" id="CHEBI:74497"/>
        <dbReference type="EC" id="2.1.1.192"/>
    </reaction>
</comment>
<comment type="catalytic activity">
    <reaction evidence="1">
        <text>adenosine(37) in tRNA + 2 reduced [2Fe-2S]-[ferredoxin] + 2 S-adenosyl-L-methionine = 2-methyladenosine(37) in tRNA + 5'-deoxyadenosine + L-methionine + 2 oxidized [2Fe-2S]-[ferredoxin] + S-adenosyl-L-homocysteine</text>
        <dbReference type="Rhea" id="RHEA:43332"/>
        <dbReference type="Rhea" id="RHEA-COMP:10000"/>
        <dbReference type="Rhea" id="RHEA-COMP:10001"/>
        <dbReference type="Rhea" id="RHEA-COMP:10162"/>
        <dbReference type="Rhea" id="RHEA-COMP:10485"/>
        <dbReference type="ChEBI" id="CHEBI:17319"/>
        <dbReference type="ChEBI" id="CHEBI:33737"/>
        <dbReference type="ChEBI" id="CHEBI:33738"/>
        <dbReference type="ChEBI" id="CHEBI:57844"/>
        <dbReference type="ChEBI" id="CHEBI:57856"/>
        <dbReference type="ChEBI" id="CHEBI:59789"/>
        <dbReference type="ChEBI" id="CHEBI:74411"/>
        <dbReference type="ChEBI" id="CHEBI:74497"/>
        <dbReference type="EC" id="2.1.1.192"/>
    </reaction>
</comment>
<comment type="cofactor">
    <cofactor evidence="1">
        <name>[4Fe-4S] cluster</name>
        <dbReference type="ChEBI" id="CHEBI:49883"/>
    </cofactor>
    <text evidence="1">Binds 1 [4Fe-4S] cluster. The cluster is coordinated with 3 cysteines and an exchangeable S-adenosyl-L-methionine.</text>
</comment>
<comment type="subcellular location">
    <subcellularLocation>
        <location evidence="1">Cytoplasm</location>
    </subcellularLocation>
</comment>
<comment type="miscellaneous">
    <text evidence="1">Reaction proceeds by a ping-pong mechanism involving intermediate methylation of a conserved cysteine residue.</text>
</comment>
<comment type="similarity">
    <text evidence="1">Belongs to the radical SAM superfamily. RlmN family.</text>
</comment>
<protein>
    <recommendedName>
        <fullName evidence="1">Dual-specificity RNA methyltransferase RlmN</fullName>
        <ecNumber evidence="1">2.1.1.192</ecNumber>
    </recommendedName>
    <alternativeName>
        <fullName evidence="1">23S rRNA (adenine(2503)-C(2))-methyltransferase</fullName>
    </alternativeName>
    <alternativeName>
        <fullName evidence="1">23S rRNA m2A2503 methyltransferase</fullName>
    </alternativeName>
    <alternativeName>
        <fullName evidence="1">Ribosomal RNA large subunit methyltransferase N</fullName>
    </alternativeName>
    <alternativeName>
        <fullName evidence="1">tRNA (adenine(37)-C(2))-methyltransferase</fullName>
    </alternativeName>
    <alternativeName>
        <fullName evidence="1">tRNA m2A37 methyltransferase</fullName>
    </alternativeName>
</protein>